<organism>
    <name type="scientific">Mus musculus</name>
    <name type="common">Mouse</name>
    <dbReference type="NCBI Taxonomy" id="10090"/>
    <lineage>
        <taxon>Eukaryota</taxon>
        <taxon>Metazoa</taxon>
        <taxon>Chordata</taxon>
        <taxon>Craniata</taxon>
        <taxon>Vertebrata</taxon>
        <taxon>Euteleostomi</taxon>
        <taxon>Mammalia</taxon>
        <taxon>Eutheria</taxon>
        <taxon>Euarchontoglires</taxon>
        <taxon>Glires</taxon>
        <taxon>Rodentia</taxon>
        <taxon>Myomorpha</taxon>
        <taxon>Muroidea</taxon>
        <taxon>Muridae</taxon>
        <taxon>Murinae</taxon>
        <taxon>Mus</taxon>
        <taxon>Mus</taxon>
    </lineage>
</organism>
<name>EVI5_MOUSE</name>
<keyword id="KW-0131">Cell cycle</keyword>
<keyword id="KW-0132">Cell division</keyword>
<keyword id="KW-0175">Coiled coil</keyword>
<keyword id="KW-0963">Cytoplasm</keyword>
<keyword id="KW-0206">Cytoskeleton</keyword>
<keyword id="KW-0539">Nucleus</keyword>
<keyword id="KW-0597">Phosphoprotein</keyword>
<keyword id="KW-1185">Reference proteome</keyword>
<keyword id="KW-0832">Ubl conjugation</keyword>
<reference key="1">
    <citation type="journal article" date="1997" name="Oncogene">
        <title>Proviral integrations at the Evi5 locus disrupt a novel 90 kDa protein with homology to the Tre2 oncogene and cell-cycle regulatory proteins.</title>
        <authorList>
            <person name="Liao X."/>
            <person name="Du Y."/>
            <person name="Morse H.C. III"/>
            <person name="Jenkins N.A."/>
            <person name="Copeland N.G."/>
        </authorList>
    </citation>
    <scope>NUCLEOTIDE SEQUENCE [MRNA]</scope>
    <scope>TISSUE SPECIFICITY</scope>
    <scope>DEVELOPMENTAL STAGE</scope>
    <source>
        <strain>C57BL/6 X CBA</strain>
        <tissue>Liver</tissue>
    </source>
</reference>
<reference key="2">
    <citation type="journal article" date="2005" name="Science">
        <title>The transcriptional landscape of the mammalian genome.</title>
        <authorList>
            <person name="Carninci P."/>
            <person name="Kasukawa T."/>
            <person name="Katayama S."/>
            <person name="Gough J."/>
            <person name="Frith M.C."/>
            <person name="Maeda N."/>
            <person name="Oyama R."/>
            <person name="Ravasi T."/>
            <person name="Lenhard B."/>
            <person name="Wells C."/>
            <person name="Kodzius R."/>
            <person name="Shimokawa K."/>
            <person name="Bajic V.B."/>
            <person name="Brenner S.E."/>
            <person name="Batalov S."/>
            <person name="Forrest A.R."/>
            <person name="Zavolan M."/>
            <person name="Davis M.J."/>
            <person name="Wilming L.G."/>
            <person name="Aidinis V."/>
            <person name="Allen J.E."/>
            <person name="Ambesi-Impiombato A."/>
            <person name="Apweiler R."/>
            <person name="Aturaliya R.N."/>
            <person name="Bailey T.L."/>
            <person name="Bansal M."/>
            <person name="Baxter L."/>
            <person name="Beisel K.W."/>
            <person name="Bersano T."/>
            <person name="Bono H."/>
            <person name="Chalk A.M."/>
            <person name="Chiu K.P."/>
            <person name="Choudhary V."/>
            <person name="Christoffels A."/>
            <person name="Clutterbuck D.R."/>
            <person name="Crowe M.L."/>
            <person name="Dalla E."/>
            <person name="Dalrymple B.P."/>
            <person name="de Bono B."/>
            <person name="Della Gatta G."/>
            <person name="di Bernardo D."/>
            <person name="Down T."/>
            <person name="Engstrom P."/>
            <person name="Fagiolini M."/>
            <person name="Faulkner G."/>
            <person name="Fletcher C.F."/>
            <person name="Fukushima T."/>
            <person name="Furuno M."/>
            <person name="Futaki S."/>
            <person name="Gariboldi M."/>
            <person name="Georgii-Hemming P."/>
            <person name="Gingeras T.R."/>
            <person name="Gojobori T."/>
            <person name="Green R.E."/>
            <person name="Gustincich S."/>
            <person name="Harbers M."/>
            <person name="Hayashi Y."/>
            <person name="Hensch T.K."/>
            <person name="Hirokawa N."/>
            <person name="Hill D."/>
            <person name="Huminiecki L."/>
            <person name="Iacono M."/>
            <person name="Ikeo K."/>
            <person name="Iwama A."/>
            <person name="Ishikawa T."/>
            <person name="Jakt M."/>
            <person name="Kanapin A."/>
            <person name="Katoh M."/>
            <person name="Kawasawa Y."/>
            <person name="Kelso J."/>
            <person name="Kitamura H."/>
            <person name="Kitano H."/>
            <person name="Kollias G."/>
            <person name="Krishnan S.P."/>
            <person name="Kruger A."/>
            <person name="Kummerfeld S.K."/>
            <person name="Kurochkin I.V."/>
            <person name="Lareau L.F."/>
            <person name="Lazarevic D."/>
            <person name="Lipovich L."/>
            <person name="Liu J."/>
            <person name="Liuni S."/>
            <person name="McWilliam S."/>
            <person name="Madan Babu M."/>
            <person name="Madera M."/>
            <person name="Marchionni L."/>
            <person name="Matsuda H."/>
            <person name="Matsuzawa S."/>
            <person name="Miki H."/>
            <person name="Mignone F."/>
            <person name="Miyake S."/>
            <person name="Morris K."/>
            <person name="Mottagui-Tabar S."/>
            <person name="Mulder N."/>
            <person name="Nakano N."/>
            <person name="Nakauchi H."/>
            <person name="Ng P."/>
            <person name="Nilsson R."/>
            <person name="Nishiguchi S."/>
            <person name="Nishikawa S."/>
            <person name="Nori F."/>
            <person name="Ohara O."/>
            <person name="Okazaki Y."/>
            <person name="Orlando V."/>
            <person name="Pang K.C."/>
            <person name="Pavan W.J."/>
            <person name="Pavesi G."/>
            <person name="Pesole G."/>
            <person name="Petrovsky N."/>
            <person name="Piazza S."/>
            <person name="Reed J."/>
            <person name="Reid J.F."/>
            <person name="Ring B.Z."/>
            <person name="Ringwald M."/>
            <person name="Rost B."/>
            <person name="Ruan Y."/>
            <person name="Salzberg S.L."/>
            <person name="Sandelin A."/>
            <person name="Schneider C."/>
            <person name="Schoenbach C."/>
            <person name="Sekiguchi K."/>
            <person name="Semple C.A."/>
            <person name="Seno S."/>
            <person name="Sessa L."/>
            <person name="Sheng Y."/>
            <person name="Shibata Y."/>
            <person name="Shimada H."/>
            <person name="Shimada K."/>
            <person name="Silva D."/>
            <person name="Sinclair B."/>
            <person name="Sperling S."/>
            <person name="Stupka E."/>
            <person name="Sugiura K."/>
            <person name="Sultana R."/>
            <person name="Takenaka Y."/>
            <person name="Taki K."/>
            <person name="Tammoja K."/>
            <person name="Tan S.L."/>
            <person name="Tang S."/>
            <person name="Taylor M.S."/>
            <person name="Tegner J."/>
            <person name="Teichmann S.A."/>
            <person name="Ueda H.R."/>
            <person name="van Nimwegen E."/>
            <person name="Verardo R."/>
            <person name="Wei C.L."/>
            <person name="Yagi K."/>
            <person name="Yamanishi H."/>
            <person name="Zabarovsky E."/>
            <person name="Zhu S."/>
            <person name="Zimmer A."/>
            <person name="Hide W."/>
            <person name="Bult C."/>
            <person name="Grimmond S.M."/>
            <person name="Teasdale R.D."/>
            <person name="Liu E.T."/>
            <person name="Brusic V."/>
            <person name="Quackenbush J."/>
            <person name="Wahlestedt C."/>
            <person name="Mattick J.S."/>
            <person name="Hume D.A."/>
            <person name="Kai C."/>
            <person name="Sasaki D."/>
            <person name="Tomaru Y."/>
            <person name="Fukuda S."/>
            <person name="Kanamori-Katayama M."/>
            <person name="Suzuki M."/>
            <person name="Aoki J."/>
            <person name="Arakawa T."/>
            <person name="Iida J."/>
            <person name="Imamura K."/>
            <person name="Itoh M."/>
            <person name="Kato T."/>
            <person name="Kawaji H."/>
            <person name="Kawagashira N."/>
            <person name="Kawashima T."/>
            <person name="Kojima M."/>
            <person name="Kondo S."/>
            <person name="Konno H."/>
            <person name="Nakano K."/>
            <person name="Ninomiya N."/>
            <person name="Nishio T."/>
            <person name="Okada M."/>
            <person name="Plessy C."/>
            <person name="Shibata K."/>
            <person name="Shiraki T."/>
            <person name="Suzuki S."/>
            <person name="Tagami M."/>
            <person name="Waki K."/>
            <person name="Watahiki A."/>
            <person name="Okamura-Oho Y."/>
            <person name="Suzuki H."/>
            <person name="Kawai J."/>
            <person name="Hayashizaki Y."/>
        </authorList>
    </citation>
    <scope>NUCLEOTIDE SEQUENCE [LARGE SCALE MRNA] OF 609-809</scope>
    <source>
        <strain>C57BL/6J</strain>
        <tissue>Embryo</tissue>
    </source>
</reference>
<reference key="3">
    <citation type="journal article" date="2007" name="Proc. Natl. Acad. Sci. U.S.A.">
        <title>Large-scale phosphorylation analysis of mouse liver.</title>
        <authorList>
            <person name="Villen J."/>
            <person name="Beausoleil S.A."/>
            <person name="Gerber S.A."/>
            <person name="Gygi S.P."/>
        </authorList>
    </citation>
    <scope>PHOSPHORYLATION [LARGE SCALE ANALYSIS] AT SER-776 AND SER-778</scope>
    <scope>IDENTIFICATION BY MASS SPECTROMETRY [LARGE SCALE ANALYSIS]</scope>
    <source>
        <tissue>Liver</tissue>
    </source>
</reference>
<reference key="4">
    <citation type="journal article" date="2010" name="Cell">
        <title>A tissue-specific atlas of mouse protein phosphorylation and expression.</title>
        <authorList>
            <person name="Huttlin E.L."/>
            <person name="Jedrychowski M.P."/>
            <person name="Elias J.E."/>
            <person name="Goswami T."/>
            <person name="Rad R."/>
            <person name="Beausoleil S.A."/>
            <person name="Villen J."/>
            <person name="Haas W."/>
            <person name="Sowa M.E."/>
            <person name="Gygi S.P."/>
        </authorList>
    </citation>
    <scope>PHOSPHORYLATION [LARGE SCALE ANALYSIS] AT SER-113; SER-776 AND SER-778</scope>
    <scope>IDENTIFICATION BY MASS SPECTROMETRY [LARGE SCALE ANALYSIS]</scope>
    <source>
        <tissue>Brain</tissue>
        <tissue>Brown adipose tissue</tissue>
        <tissue>Kidney</tissue>
        <tissue>Liver</tissue>
        <tissue>Lung</tissue>
        <tissue>Pancreas</tissue>
        <tissue>Spleen</tissue>
        <tissue>Testis</tissue>
    </source>
</reference>
<comment type="function">
    <text evidence="1">Functions as a regulator of cell cycle progression by stabilizing the FBXO5 protein and promoting cyclin-A accumulation during interphase. May play a role in cytokinesis (By similarity).</text>
</comment>
<comment type="subunit">
    <text evidence="1">Dimeric and monomeric. Interacts with alpha- and gamma-tubulin. Interacts with FBXO5. Interacts with the chromosome passenger complex (CPC) which is at least composed of AURKB/aurora-B, BIRC5/survivin, CDCA8/borealin and INCENP (By similarity).</text>
</comment>
<comment type="subcellular location">
    <subcellularLocation>
        <location evidence="1">Nucleus</location>
    </subcellularLocation>
    <subcellularLocation>
        <location evidence="1">Cytoplasm</location>
        <location evidence="1">Cytoskeleton</location>
        <location evidence="1">Microtubule organizing center</location>
        <location evidence="1">Centrosome</location>
    </subcellularLocation>
    <subcellularLocation>
        <location evidence="1">Cytoplasm</location>
        <location evidence="1">Cytoskeleton</location>
        <location evidence="1">Spindle</location>
    </subcellularLocation>
    <text evidence="1">Associates with the mitotic spindle through anaphase and remains within the midzone and midbody until completion of cytokinesis.</text>
</comment>
<comment type="tissue specificity">
    <text evidence="6">Widely expressed.</text>
</comment>
<comment type="developmental stage">
    <text evidence="6">Detected in the embryo from 7 dpc to 17 dpc.</text>
</comment>
<comment type="PTM">
    <text evidence="1">Probably phosphorylated by PLK1; may be required for degradation during mitosis.</text>
</comment>
<comment type="PTM">
    <text evidence="1">Ubiquitinated. Degradation during prophase is ubiquitin-dependent (By similarity).</text>
</comment>
<comment type="miscellaneous">
    <text>This gene is a common site of retroviral integration in T-cell lymphomas of AKXD mice.</text>
</comment>
<protein>
    <recommendedName>
        <fullName>Ecotropic viral integration site 5 protein</fullName>
        <shortName>EVI-5</shortName>
    </recommendedName>
</protein>
<dbReference type="EMBL" id="U53586">
    <property type="protein sequence ID" value="AAB40607.1"/>
    <property type="molecule type" value="mRNA"/>
</dbReference>
<dbReference type="EMBL" id="AK164208">
    <property type="protein sequence ID" value="BAE37684.1"/>
    <property type="molecule type" value="mRNA"/>
</dbReference>
<dbReference type="CCDS" id="CCDS39198.1"/>
<dbReference type="SMR" id="P97366"/>
<dbReference type="FunCoup" id="P97366">
    <property type="interactions" value="942"/>
</dbReference>
<dbReference type="IntAct" id="P97366">
    <property type="interactions" value="1"/>
</dbReference>
<dbReference type="STRING" id="10090.ENSMUSP00000108261"/>
<dbReference type="GlyGen" id="P97366">
    <property type="glycosylation" value="2 sites, 2 N-linked glycans (2 sites)"/>
</dbReference>
<dbReference type="iPTMnet" id="P97366"/>
<dbReference type="PhosphoSitePlus" id="P97366"/>
<dbReference type="PaxDb" id="10090-ENSMUSP00000108261"/>
<dbReference type="ProteomicsDB" id="271506"/>
<dbReference type="Pumba" id="P97366"/>
<dbReference type="AGR" id="MGI:104736"/>
<dbReference type="MGI" id="MGI:104736">
    <property type="gene designation" value="Evi5"/>
</dbReference>
<dbReference type="eggNOG" id="KOG4436">
    <property type="taxonomic scope" value="Eukaryota"/>
</dbReference>
<dbReference type="InParanoid" id="P97366"/>
<dbReference type="PhylomeDB" id="P97366"/>
<dbReference type="ChiTaRS" id="Evi5">
    <property type="organism name" value="mouse"/>
</dbReference>
<dbReference type="PRO" id="PR:P97366"/>
<dbReference type="Proteomes" id="UP000000589">
    <property type="component" value="Unplaced"/>
</dbReference>
<dbReference type="RNAct" id="P97366">
    <property type="molecule type" value="protein"/>
</dbReference>
<dbReference type="GO" id="GO:0005813">
    <property type="term" value="C:centrosome"/>
    <property type="evidence" value="ECO:0007669"/>
    <property type="project" value="UniProtKB-SubCell"/>
</dbReference>
<dbReference type="GO" id="GO:0005737">
    <property type="term" value="C:cytoplasm"/>
    <property type="evidence" value="ECO:0007669"/>
    <property type="project" value="UniProtKB-KW"/>
</dbReference>
<dbReference type="GO" id="GO:0005634">
    <property type="term" value="C:nucleus"/>
    <property type="evidence" value="ECO:0007669"/>
    <property type="project" value="UniProtKB-SubCell"/>
</dbReference>
<dbReference type="GO" id="GO:0005819">
    <property type="term" value="C:spindle"/>
    <property type="evidence" value="ECO:0007669"/>
    <property type="project" value="UniProtKB-SubCell"/>
</dbReference>
<dbReference type="GO" id="GO:0051301">
    <property type="term" value="P:cell division"/>
    <property type="evidence" value="ECO:0007669"/>
    <property type="project" value="UniProtKB-KW"/>
</dbReference>
<dbReference type="FunFam" id="1.10.10.750:FF:000002">
    <property type="entry name" value="Ecotropic viral integration site 5"/>
    <property type="match status" value="1"/>
</dbReference>
<dbReference type="FunFam" id="1.10.472.80:FF:000002">
    <property type="entry name" value="Ecotropic viral integration site 5"/>
    <property type="match status" value="1"/>
</dbReference>
<dbReference type="FunFam" id="1.10.8.270:FF:000003">
    <property type="entry name" value="Ecotropic viral integration site 5"/>
    <property type="match status" value="1"/>
</dbReference>
<dbReference type="Gene3D" id="1.10.8.270">
    <property type="entry name" value="putative rabgap domain of human tbc1 domain family member 14 like domains"/>
    <property type="match status" value="1"/>
</dbReference>
<dbReference type="Gene3D" id="1.10.10.750">
    <property type="entry name" value="Ypt/Rab-GAP domain of gyp1p, domain 1"/>
    <property type="match status" value="1"/>
</dbReference>
<dbReference type="Gene3D" id="1.10.472.80">
    <property type="entry name" value="Ypt/Rab-GAP domain of gyp1p, domain 3"/>
    <property type="match status" value="1"/>
</dbReference>
<dbReference type="InterPro" id="IPR000195">
    <property type="entry name" value="Rab-GAP-TBC_dom"/>
</dbReference>
<dbReference type="InterPro" id="IPR035969">
    <property type="entry name" value="Rab-GAP_TBC_sf"/>
</dbReference>
<dbReference type="InterPro" id="IPR050302">
    <property type="entry name" value="Rab_GAP_TBC_domain"/>
</dbReference>
<dbReference type="PANTHER" id="PTHR47219:SF11">
    <property type="entry name" value="EVI5-LIKE PROTEIN ISOFORM X1"/>
    <property type="match status" value="1"/>
</dbReference>
<dbReference type="PANTHER" id="PTHR47219">
    <property type="entry name" value="RAB GTPASE-ACTIVATING PROTEIN 1-LIKE"/>
    <property type="match status" value="1"/>
</dbReference>
<dbReference type="Pfam" id="PF00566">
    <property type="entry name" value="RabGAP-TBC"/>
    <property type="match status" value="1"/>
</dbReference>
<dbReference type="SMART" id="SM00164">
    <property type="entry name" value="TBC"/>
    <property type="match status" value="1"/>
</dbReference>
<dbReference type="SUPFAM" id="SSF47923">
    <property type="entry name" value="Ypt/Rab-GAP domain of gyp1p"/>
    <property type="match status" value="2"/>
</dbReference>
<dbReference type="PROSITE" id="PS50086">
    <property type="entry name" value="TBC_RABGAP"/>
    <property type="match status" value="1"/>
</dbReference>
<evidence type="ECO:0000250" key="1"/>
<evidence type="ECO:0000250" key="2">
    <source>
        <dbReference type="UniProtKB" id="O60447"/>
    </source>
</evidence>
<evidence type="ECO:0000255" key="3"/>
<evidence type="ECO:0000255" key="4">
    <source>
        <dbReference type="PROSITE-ProRule" id="PRU00163"/>
    </source>
</evidence>
<evidence type="ECO:0000256" key="5">
    <source>
        <dbReference type="SAM" id="MobiDB-lite"/>
    </source>
</evidence>
<evidence type="ECO:0000269" key="6">
    <source>
    </source>
</evidence>
<evidence type="ECO:0000305" key="7"/>
<evidence type="ECO:0007744" key="8">
    <source>
    </source>
</evidence>
<evidence type="ECO:0007744" key="9">
    <source>
    </source>
</evidence>
<sequence>MVTTKMTAAFRNPNRRQVATDKVAEKLSSTLSWVKNTVSHTVSQMASQVASPSASLHTTSSSTTLSTPTQSPSSPSKLSPDDLELLAKLEEQNRLIETDSKSLRSVNGSRRNSGSSLVSSSSASSNLSHLEEDSWILWGRIVNEWDDVRKKKEKQVKELVRKGIPHHFRAIVWQLLCNAQSMTIKDQYSELLKMTSPCEKLIRRDIARTYPEHNFFKEKDSLGQEVLFNVMKAYSLVDRELVTVRAVLSSLDCCCMQMPEEEAFCVFVKLMQDYRLRELFKPSMAELGLCMYQFECMIQEYLPELFVHFQSQSFHTSMYASSWFLTIFLTTFPLPIATRIFDIFMSEGLEIVFRVGLALLQMNQAELMQLDMEGMLQHFQKVIPHQFDGGPEKLIQSAYQVKYNSKKMKKLEKEYTTIKTKEMEEQGEIKRLRTENRLLKQRIETLEKHKCSSTYNEDFVLQLEKELVQARLSEAESQCALKEMQDKVLDIEKKNNSFPDENNIARLQEELIAVKLREAEAIMGLKELRQQVRTLEEHWQRHLARTSGRWKDPPKKNAVNELQDELMSIRLREAETQAEIREMKQRMMEMETQNQINSNQLRRAEQEVNSLQEKVCSLSVKNKGLLAQLSEAKRRQAEIECKNKEEVMAVRLREADSIAAVAELQQHIAELEIQKEEGKLQGQLNRSDSNQYIRELKDQIAELTHELRCLKGQRDFSSRPPFDGIHIVSHLIGDDELFHSSDEDFIDSSLQESAIGFPLHRKSGPMSLNPALADGSESEAEDGMLGPQESDPEAPQKQPPQRESYSTTV</sequence>
<proteinExistence type="evidence at protein level"/>
<feature type="chain" id="PRO_0000256242" description="Ecotropic viral integration site 5 protein">
    <location>
        <begin position="1"/>
        <end position="809"/>
    </location>
</feature>
<feature type="domain" description="Rab-GAP TBC" evidence="4">
    <location>
        <begin position="163"/>
        <end position="348"/>
    </location>
</feature>
<feature type="region of interest" description="Interaction with alpha-tubulin, gamma-tubulin, BIRC5 and FBXO5" evidence="1">
    <location>
        <begin position="1"/>
        <end position="483"/>
    </location>
</feature>
<feature type="region of interest" description="Disordered" evidence="5">
    <location>
        <begin position="49"/>
        <end position="80"/>
    </location>
</feature>
<feature type="region of interest" description="Disordered" evidence="5">
    <location>
        <begin position="99"/>
        <end position="123"/>
    </location>
</feature>
<feature type="region of interest" description="Dimerization" evidence="1">
    <location>
        <begin position="128"/>
        <end position="693"/>
    </location>
</feature>
<feature type="region of interest" description="Targeting to the centrosomes" evidence="1">
    <location>
        <begin position="377"/>
        <end position="809"/>
    </location>
</feature>
<feature type="region of interest" description="Interaction with AURKB and INCENP" evidence="1">
    <location>
        <begin position="487"/>
        <end position="809"/>
    </location>
</feature>
<feature type="region of interest" description="Disordered" evidence="5">
    <location>
        <begin position="760"/>
        <end position="809"/>
    </location>
</feature>
<feature type="coiled-coil region" evidence="3">
    <location>
        <begin position="406"/>
        <end position="717"/>
    </location>
</feature>
<feature type="compositionally biased region" description="Low complexity" evidence="5">
    <location>
        <begin position="51"/>
        <end position="78"/>
    </location>
</feature>
<feature type="compositionally biased region" description="Low complexity" evidence="5">
    <location>
        <begin position="103"/>
        <end position="123"/>
    </location>
</feature>
<feature type="compositionally biased region" description="Polar residues" evidence="5">
    <location>
        <begin position="799"/>
        <end position="809"/>
    </location>
</feature>
<feature type="modified residue" description="Phosphoserine" evidence="2">
    <location>
        <position position="102"/>
    </location>
</feature>
<feature type="modified residue" description="Phosphoserine" evidence="9">
    <location>
        <position position="113"/>
    </location>
</feature>
<feature type="modified residue" description="Phosphoserine" evidence="2">
    <location>
        <position position="497"/>
    </location>
</feature>
<feature type="modified residue" description="Phosphoserine" evidence="2">
    <location>
        <position position="689"/>
    </location>
</feature>
<feature type="modified residue" description="Phosphoserine" evidence="8 9">
    <location>
        <position position="776"/>
    </location>
</feature>
<feature type="modified residue" description="Phosphoserine" evidence="8 9">
    <location>
        <position position="778"/>
    </location>
</feature>
<feature type="sequence conflict" description="In Ref. 1; AAB40607." evidence="7" ref="1">
    <original>E</original>
    <variation>K</variation>
    <location>
        <position position="672"/>
    </location>
</feature>
<gene>
    <name type="primary">Evi5</name>
</gene>
<accession>P97366</accession>
<accession>Q3TPQ1</accession>